<dbReference type="EC" id="5.2.1.8" evidence="1"/>
<dbReference type="EMBL" id="CP001010">
    <property type="protein sequence ID" value="ACB44107.1"/>
    <property type="molecule type" value="Genomic_DNA"/>
</dbReference>
<dbReference type="SMR" id="B1XUT0"/>
<dbReference type="STRING" id="452638.Pnec_0909"/>
<dbReference type="KEGG" id="pne:Pnec_0909"/>
<dbReference type="eggNOG" id="COG0544">
    <property type="taxonomic scope" value="Bacteria"/>
</dbReference>
<dbReference type="HOGENOM" id="CLU_033058_2_0_4"/>
<dbReference type="OrthoDB" id="9767721at2"/>
<dbReference type="GO" id="GO:0005737">
    <property type="term" value="C:cytoplasm"/>
    <property type="evidence" value="ECO:0007669"/>
    <property type="project" value="UniProtKB-SubCell"/>
</dbReference>
<dbReference type="GO" id="GO:0003755">
    <property type="term" value="F:peptidyl-prolyl cis-trans isomerase activity"/>
    <property type="evidence" value="ECO:0007669"/>
    <property type="project" value="UniProtKB-UniRule"/>
</dbReference>
<dbReference type="GO" id="GO:0051301">
    <property type="term" value="P:cell division"/>
    <property type="evidence" value="ECO:0007669"/>
    <property type="project" value="UniProtKB-KW"/>
</dbReference>
<dbReference type="GO" id="GO:0006457">
    <property type="term" value="P:protein folding"/>
    <property type="evidence" value="ECO:0007669"/>
    <property type="project" value="UniProtKB-UniRule"/>
</dbReference>
<dbReference type="GO" id="GO:0015031">
    <property type="term" value="P:protein transport"/>
    <property type="evidence" value="ECO:0007669"/>
    <property type="project" value="UniProtKB-UniRule"/>
</dbReference>
<dbReference type="FunFam" id="3.10.50.40:FF:000001">
    <property type="entry name" value="Trigger factor"/>
    <property type="match status" value="1"/>
</dbReference>
<dbReference type="Gene3D" id="3.10.50.40">
    <property type="match status" value="1"/>
</dbReference>
<dbReference type="Gene3D" id="3.30.70.1050">
    <property type="entry name" value="Trigger factor ribosome-binding domain"/>
    <property type="match status" value="1"/>
</dbReference>
<dbReference type="Gene3D" id="1.10.3120.10">
    <property type="entry name" value="Trigger factor, C-terminal domain"/>
    <property type="match status" value="1"/>
</dbReference>
<dbReference type="HAMAP" id="MF_00303">
    <property type="entry name" value="Trigger_factor_Tig"/>
    <property type="match status" value="1"/>
</dbReference>
<dbReference type="InterPro" id="IPR046357">
    <property type="entry name" value="PPIase_dom_sf"/>
</dbReference>
<dbReference type="InterPro" id="IPR001179">
    <property type="entry name" value="PPIase_FKBP_dom"/>
</dbReference>
<dbReference type="InterPro" id="IPR005215">
    <property type="entry name" value="Trig_fac"/>
</dbReference>
<dbReference type="InterPro" id="IPR008880">
    <property type="entry name" value="Trigger_fac_C"/>
</dbReference>
<dbReference type="InterPro" id="IPR037041">
    <property type="entry name" value="Trigger_fac_C_sf"/>
</dbReference>
<dbReference type="InterPro" id="IPR008881">
    <property type="entry name" value="Trigger_fac_ribosome-bd_bac"/>
</dbReference>
<dbReference type="InterPro" id="IPR036611">
    <property type="entry name" value="Trigger_fac_ribosome-bd_sf"/>
</dbReference>
<dbReference type="InterPro" id="IPR027304">
    <property type="entry name" value="Trigger_fact/SurA_dom_sf"/>
</dbReference>
<dbReference type="NCBIfam" id="TIGR00115">
    <property type="entry name" value="tig"/>
    <property type="match status" value="1"/>
</dbReference>
<dbReference type="Pfam" id="PF00254">
    <property type="entry name" value="FKBP_C"/>
    <property type="match status" value="1"/>
</dbReference>
<dbReference type="Pfam" id="PF05698">
    <property type="entry name" value="Trigger_C"/>
    <property type="match status" value="1"/>
</dbReference>
<dbReference type="Pfam" id="PF05697">
    <property type="entry name" value="Trigger_N"/>
    <property type="match status" value="1"/>
</dbReference>
<dbReference type="PIRSF" id="PIRSF003095">
    <property type="entry name" value="Trigger_factor"/>
    <property type="match status" value="1"/>
</dbReference>
<dbReference type="SUPFAM" id="SSF54534">
    <property type="entry name" value="FKBP-like"/>
    <property type="match status" value="1"/>
</dbReference>
<dbReference type="SUPFAM" id="SSF109998">
    <property type="entry name" value="Triger factor/SurA peptide-binding domain-like"/>
    <property type="match status" value="1"/>
</dbReference>
<dbReference type="SUPFAM" id="SSF102735">
    <property type="entry name" value="Trigger factor ribosome-binding domain"/>
    <property type="match status" value="1"/>
</dbReference>
<dbReference type="PROSITE" id="PS50059">
    <property type="entry name" value="FKBP_PPIASE"/>
    <property type="match status" value="1"/>
</dbReference>
<name>TIG_POLNS</name>
<protein>
    <recommendedName>
        <fullName evidence="1">Trigger factor</fullName>
        <shortName evidence="1">TF</shortName>
        <ecNumber evidence="1">5.2.1.8</ecNumber>
    </recommendedName>
    <alternativeName>
        <fullName evidence="1">PPIase</fullName>
    </alternativeName>
</protein>
<gene>
    <name evidence="1" type="primary">tig</name>
    <name type="ordered locus">Pnec_0909</name>
</gene>
<keyword id="KW-0131">Cell cycle</keyword>
<keyword id="KW-0132">Cell division</keyword>
<keyword id="KW-0143">Chaperone</keyword>
<keyword id="KW-0963">Cytoplasm</keyword>
<keyword id="KW-0413">Isomerase</keyword>
<keyword id="KW-0697">Rotamase</keyword>
<evidence type="ECO:0000255" key="1">
    <source>
        <dbReference type="HAMAP-Rule" id="MF_00303"/>
    </source>
</evidence>
<comment type="function">
    <text evidence="1">Involved in protein export. Acts as a chaperone by maintaining the newly synthesized protein in an open conformation. Functions as a peptidyl-prolyl cis-trans isomerase.</text>
</comment>
<comment type="catalytic activity">
    <reaction evidence="1">
        <text>[protein]-peptidylproline (omega=180) = [protein]-peptidylproline (omega=0)</text>
        <dbReference type="Rhea" id="RHEA:16237"/>
        <dbReference type="Rhea" id="RHEA-COMP:10747"/>
        <dbReference type="Rhea" id="RHEA-COMP:10748"/>
        <dbReference type="ChEBI" id="CHEBI:83833"/>
        <dbReference type="ChEBI" id="CHEBI:83834"/>
        <dbReference type="EC" id="5.2.1.8"/>
    </reaction>
</comment>
<comment type="subcellular location">
    <subcellularLocation>
        <location>Cytoplasm</location>
    </subcellularLocation>
    <text evidence="1">About half TF is bound to the ribosome near the polypeptide exit tunnel while the other half is free in the cytoplasm.</text>
</comment>
<comment type="domain">
    <text evidence="1">Consists of 3 domains; the N-terminus binds the ribosome, the middle domain has PPIase activity, while the C-terminus has intrinsic chaperone activity on its own.</text>
</comment>
<comment type="similarity">
    <text evidence="1">Belongs to the FKBP-type PPIase family. Tig subfamily.</text>
</comment>
<feature type="chain" id="PRO_1000115564" description="Trigger factor">
    <location>
        <begin position="1"/>
        <end position="445"/>
    </location>
</feature>
<feature type="domain" description="PPIase FKBP-type" evidence="1">
    <location>
        <begin position="172"/>
        <end position="257"/>
    </location>
</feature>
<accession>B1XUT0</accession>
<reference key="1">
    <citation type="journal article" date="2013" name="Proc. Natl. Acad. Sci. U.S.A.">
        <title>Polynucleobacter necessarius, a model for genome reduction in both free-living and symbiotic bacteria.</title>
        <authorList>
            <person name="Boscaro V."/>
            <person name="Felletti M."/>
            <person name="Vannini C."/>
            <person name="Ackerman M.S."/>
            <person name="Chain P.S."/>
            <person name="Malfatti S."/>
            <person name="Vergez L.M."/>
            <person name="Shin M."/>
            <person name="Doak T.G."/>
            <person name="Lynch M."/>
            <person name="Petroni G."/>
        </authorList>
    </citation>
    <scope>NUCLEOTIDE SEQUENCE [LARGE SCALE GENOMIC DNA]</scope>
    <source>
        <strain>STIR1</strain>
    </source>
</reference>
<organism>
    <name type="scientific">Polynucleobacter necessarius subsp. necessarius (strain STIR1)</name>
    <dbReference type="NCBI Taxonomy" id="452638"/>
    <lineage>
        <taxon>Bacteria</taxon>
        <taxon>Pseudomonadati</taxon>
        <taxon>Pseudomonadota</taxon>
        <taxon>Betaproteobacteria</taxon>
        <taxon>Burkholderiales</taxon>
        <taxon>Burkholderiaceae</taxon>
        <taxon>Polynucleobacter</taxon>
    </lineage>
</organism>
<proteinExistence type="inferred from homology"/>
<sequence length="445" mass="49239">MAVQIENLGSLDRKMTLEFARADLAKAREARLAKVGKSMKMAGFRPGKVPKNLVEKQHGMQVDFELQFDKAAELFYELAQKEGVALAGQPRLEPKSEIDAEKVVFDAFFEVLPEVKIGDFSKAEVTKYTTDIGEAEIDRALDALRKQQVHYHPRGEAGPHGDGGSNTAAQNGDQVVINFVGKIDGVEFAGGKAENFECVLGEGRMLPEFEAATLGLKVGESKSFPLSFPADYHGKDVAGKTAEFTITVKSVNWAHLPVVDDAFALSLGVTEGGVTKMRAEVKENLDREVKRRVTTLLKSEVMDKLNSLCELDVPKSLVASEQERLVEGARQDLMQRGVPNAKDAPIPAEIFAEQATKRVRLGLILSELVKNQNLIATADQIKAEIDEQATTYEDPKEVIRWFYRNPGRLKDIENLVLEDNVIKYFTSQAKVNDKSVTFEELSKLN</sequence>